<keyword id="KW-1185">Reference proteome</keyword>
<keyword id="KW-0687">Ribonucleoprotein</keyword>
<keyword id="KW-0689">Ribosomal protein</keyword>
<keyword id="KW-0694">RNA-binding</keyword>
<keyword id="KW-0699">rRNA-binding</keyword>
<evidence type="ECO:0000255" key="1">
    <source>
        <dbReference type="HAMAP-Rule" id="MF_00500"/>
    </source>
</evidence>
<evidence type="ECO:0000305" key="2"/>
<gene>
    <name evidence="1" type="primary">rpsT</name>
    <name type="ordered locus">NE2340</name>
</gene>
<feature type="chain" id="PRO_0000168000" description="Small ribosomal subunit protein bS20">
    <location>
        <begin position="1"/>
        <end position="87"/>
    </location>
</feature>
<organism>
    <name type="scientific">Nitrosomonas europaea (strain ATCC 19718 / CIP 103999 / KCTC 2705 / NBRC 14298)</name>
    <dbReference type="NCBI Taxonomy" id="228410"/>
    <lineage>
        <taxon>Bacteria</taxon>
        <taxon>Pseudomonadati</taxon>
        <taxon>Pseudomonadota</taxon>
        <taxon>Betaproteobacteria</taxon>
        <taxon>Nitrosomonadales</taxon>
        <taxon>Nitrosomonadaceae</taxon>
        <taxon>Nitrosomonas</taxon>
    </lineage>
</organism>
<name>RS20_NITEU</name>
<sequence>MANTAQAKKRVRQTATRRERNFGLRSKLRTAIKGVRKAVAAGDKNVAEVVFRKAVSVIDSVASKGIIHKNKASRHKSRLSGAVKAMG</sequence>
<dbReference type="EMBL" id="AL954747">
    <property type="protein sequence ID" value="CAD86252.1"/>
    <property type="molecule type" value="Genomic_DNA"/>
</dbReference>
<dbReference type="RefSeq" id="WP_011112820.1">
    <property type="nucleotide sequence ID" value="NC_004757.1"/>
</dbReference>
<dbReference type="SMR" id="Q82SI6"/>
<dbReference type="STRING" id="228410.NE2340"/>
<dbReference type="GeneID" id="87105471"/>
<dbReference type="KEGG" id="neu:NE2340"/>
<dbReference type="eggNOG" id="COG0268">
    <property type="taxonomic scope" value="Bacteria"/>
</dbReference>
<dbReference type="HOGENOM" id="CLU_160655_4_0_4"/>
<dbReference type="OrthoDB" id="9807974at2"/>
<dbReference type="PhylomeDB" id="Q82SI6"/>
<dbReference type="Proteomes" id="UP000001416">
    <property type="component" value="Chromosome"/>
</dbReference>
<dbReference type="GO" id="GO:0005829">
    <property type="term" value="C:cytosol"/>
    <property type="evidence" value="ECO:0007669"/>
    <property type="project" value="TreeGrafter"/>
</dbReference>
<dbReference type="GO" id="GO:0015935">
    <property type="term" value="C:small ribosomal subunit"/>
    <property type="evidence" value="ECO:0007669"/>
    <property type="project" value="TreeGrafter"/>
</dbReference>
<dbReference type="GO" id="GO:0070181">
    <property type="term" value="F:small ribosomal subunit rRNA binding"/>
    <property type="evidence" value="ECO:0007669"/>
    <property type="project" value="TreeGrafter"/>
</dbReference>
<dbReference type="GO" id="GO:0003735">
    <property type="term" value="F:structural constituent of ribosome"/>
    <property type="evidence" value="ECO:0007669"/>
    <property type="project" value="InterPro"/>
</dbReference>
<dbReference type="GO" id="GO:0006412">
    <property type="term" value="P:translation"/>
    <property type="evidence" value="ECO:0007669"/>
    <property type="project" value="UniProtKB-UniRule"/>
</dbReference>
<dbReference type="FunFam" id="1.20.58.110:FF:000001">
    <property type="entry name" value="30S ribosomal protein S20"/>
    <property type="match status" value="1"/>
</dbReference>
<dbReference type="Gene3D" id="1.20.58.110">
    <property type="entry name" value="Ribosomal protein S20"/>
    <property type="match status" value="1"/>
</dbReference>
<dbReference type="HAMAP" id="MF_00500">
    <property type="entry name" value="Ribosomal_bS20"/>
    <property type="match status" value="1"/>
</dbReference>
<dbReference type="InterPro" id="IPR002583">
    <property type="entry name" value="Ribosomal_bS20"/>
</dbReference>
<dbReference type="InterPro" id="IPR036510">
    <property type="entry name" value="Ribosomal_bS20_sf"/>
</dbReference>
<dbReference type="NCBIfam" id="TIGR00029">
    <property type="entry name" value="S20"/>
    <property type="match status" value="1"/>
</dbReference>
<dbReference type="PANTHER" id="PTHR33398">
    <property type="entry name" value="30S RIBOSOMAL PROTEIN S20"/>
    <property type="match status" value="1"/>
</dbReference>
<dbReference type="PANTHER" id="PTHR33398:SF1">
    <property type="entry name" value="SMALL RIBOSOMAL SUBUNIT PROTEIN BS20C"/>
    <property type="match status" value="1"/>
</dbReference>
<dbReference type="Pfam" id="PF01649">
    <property type="entry name" value="Ribosomal_S20p"/>
    <property type="match status" value="1"/>
</dbReference>
<dbReference type="SUPFAM" id="SSF46992">
    <property type="entry name" value="Ribosomal protein S20"/>
    <property type="match status" value="1"/>
</dbReference>
<proteinExistence type="inferred from homology"/>
<reference key="1">
    <citation type="journal article" date="2003" name="J. Bacteriol.">
        <title>Complete genome sequence of the ammonia-oxidizing bacterium and obligate chemolithoautotroph Nitrosomonas europaea.</title>
        <authorList>
            <person name="Chain P."/>
            <person name="Lamerdin J.E."/>
            <person name="Larimer F.W."/>
            <person name="Regala W."/>
            <person name="Lao V."/>
            <person name="Land M.L."/>
            <person name="Hauser L."/>
            <person name="Hooper A.B."/>
            <person name="Klotz M.G."/>
            <person name="Norton J."/>
            <person name="Sayavedra-Soto L.A."/>
            <person name="Arciero D.M."/>
            <person name="Hommes N.G."/>
            <person name="Whittaker M.M."/>
            <person name="Arp D.J."/>
        </authorList>
    </citation>
    <scope>NUCLEOTIDE SEQUENCE [LARGE SCALE GENOMIC DNA]</scope>
    <source>
        <strain>ATCC 19718 / CIP 103999 / KCTC 2705 / NBRC 14298</strain>
    </source>
</reference>
<protein>
    <recommendedName>
        <fullName evidence="1">Small ribosomal subunit protein bS20</fullName>
    </recommendedName>
    <alternativeName>
        <fullName evidence="2">30S ribosomal protein S20</fullName>
    </alternativeName>
</protein>
<accession>Q82SI6</accession>
<comment type="function">
    <text evidence="1">Binds directly to 16S ribosomal RNA.</text>
</comment>
<comment type="similarity">
    <text evidence="1">Belongs to the bacterial ribosomal protein bS20 family.</text>
</comment>